<protein>
    <recommendedName>
        <fullName evidence="1">Proteasome subunit alpha</fullName>
    </recommendedName>
    <alternativeName>
        <fullName evidence="1">20S proteasome alpha subunit</fullName>
    </alternativeName>
    <alternativeName>
        <fullName evidence="1">Proteasome core protein PrcA</fullName>
    </alternativeName>
</protein>
<sequence length="273" mass="28743">MAMQFYASPEQIMRDRSELARKGIARGRSAVVLSYAGGVLFVAENLSSALHKVGEIYDRIGFAAVGRYNEFENLRRAGVRMADLNGLSYDRRDVTGRALANAFAQTLGAIFTEQSKPFEVEICVAQVGATTADDELYRLTYDGSVNDEPGRMAMGGQAEAITGVLKSNHRPDMSLGDAVKVAVQALGSVGGEGGAARTIAADQLEVAVLDRGRVGRTFRRVTGAALTVLLDDGAAGQPPSSSDTDTSAAEARKPTASAGSADLEGPEPERPDS</sequence>
<reference key="1">
    <citation type="submission" date="2007-10" db="EMBL/GenBank/DDBJ databases">
        <title>Complete sequence of Salinispora arenicola CNS-205.</title>
        <authorList>
            <consortium name="US DOE Joint Genome Institute"/>
            <person name="Copeland A."/>
            <person name="Lucas S."/>
            <person name="Lapidus A."/>
            <person name="Barry K."/>
            <person name="Glavina del Rio T."/>
            <person name="Dalin E."/>
            <person name="Tice H."/>
            <person name="Pitluck S."/>
            <person name="Foster B."/>
            <person name="Schmutz J."/>
            <person name="Larimer F."/>
            <person name="Land M."/>
            <person name="Hauser L."/>
            <person name="Kyrpides N."/>
            <person name="Ivanova N."/>
            <person name="Jensen P.R."/>
            <person name="Moore B.S."/>
            <person name="Penn K."/>
            <person name="Jenkins C."/>
            <person name="Udwary D."/>
            <person name="Xiang L."/>
            <person name="Gontang E."/>
            <person name="Richardson P."/>
        </authorList>
    </citation>
    <scope>NUCLEOTIDE SEQUENCE [LARGE SCALE GENOMIC DNA]</scope>
    <source>
        <strain>CNS-205</strain>
    </source>
</reference>
<accession>A8M2A4</accession>
<feature type="chain" id="PRO_0000397172" description="Proteasome subunit alpha">
    <location>
        <begin position="1"/>
        <end position="273"/>
    </location>
</feature>
<feature type="region of interest" description="Disordered" evidence="2">
    <location>
        <begin position="231"/>
        <end position="273"/>
    </location>
</feature>
<feature type="compositionally biased region" description="Low complexity" evidence="2">
    <location>
        <begin position="238"/>
        <end position="249"/>
    </location>
</feature>
<evidence type="ECO:0000255" key="1">
    <source>
        <dbReference type="HAMAP-Rule" id="MF_00289"/>
    </source>
</evidence>
<evidence type="ECO:0000256" key="2">
    <source>
        <dbReference type="SAM" id="MobiDB-lite"/>
    </source>
</evidence>
<organism>
    <name type="scientific">Salinispora arenicola (strain CNS-205)</name>
    <dbReference type="NCBI Taxonomy" id="391037"/>
    <lineage>
        <taxon>Bacteria</taxon>
        <taxon>Bacillati</taxon>
        <taxon>Actinomycetota</taxon>
        <taxon>Actinomycetes</taxon>
        <taxon>Micromonosporales</taxon>
        <taxon>Micromonosporaceae</taxon>
        <taxon>Salinispora</taxon>
    </lineage>
</organism>
<keyword id="KW-0963">Cytoplasm</keyword>
<keyword id="KW-0647">Proteasome</keyword>
<name>PSA_SALAI</name>
<dbReference type="EMBL" id="CP000850">
    <property type="protein sequence ID" value="ABV98220.1"/>
    <property type="molecule type" value="Genomic_DNA"/>
</dbReference>
<dbReference type="SMR" id="A8M2A4"/>
<dbReference type="STRING" id="391037.Sare_2362"/>
<dbReference type="MEROPS" id="T01.980"/>
<dbReference type="KEGG" id="saq:Sare_2362"/>
<dbReference type="PATRIC" id="fig|391037.6.peg.2395"/>
<dbReference type="eggNOG" id="COG0638">
    <property type="taxonomic scope" value="Bacteria"/>
</dbReference>
<dbReference type="HOGENOM" id="CLU_071031_0_0_11"/>
<dbReference type="OrthoDB" id="9775643at2"/>
<dbReference type="UniPathway" id="UPA00997"/>
<dbReference type="GO" id="GO:0005737">
    <property type="term" value="C:cytoplasm"/>
    <property type="evidence" value="ECO:0007669"/>
    <property type="project" value="UniProtKB-SubCell"/>
</dbReference>
<dbReference type="GO" id="GO:0019773">
    <property type="term" value="C:proteasome core complex, alpha-subunit complex"/>
    <property type="evidence" value="ECO:0007669"/>
    <property type="project" value="UniProtKB-UniRule"/>
</dbReference>
<dbReference type="GO" id="GO:0004298">
    <property type="term" value="F:threonine-type endopeptidase activity"/>
    <property type="evidence" value="ECO:0007669"/>
    <property type="project" value="InterPro"/>
</dbReference>
<dbReference type="GO" id="GO:0019941">
    <property type="term" value="P:modification-dependent protein catabolic process"/>
    <property type="evidence" value="ECO:0007669"/>
    <property type="project" value="UniProtKB-UniRule"/>
</dbReference>
<dbReference type="GO" id="GO:0010498">
    <property type="term" value="P:proteasomal protein catabolic process"/>
    <property type="evidence" value="ECO:0007669"/>
    <property type="project" value="UniProtKB-UniRule"/>
</dbReference>
<dbReference type="CDD" id="cd01906">
    <property type="entry name" value="proteasome_protease_HslV"/>
    <property type="match status" value="1"/>
</dbReference>
<dbReference type="Gene3D" id="3.60.20.10">
    <property type="entry name" value="Glutamine Phosphoribosylpyrophosphate, subunit 1, domain 1"/>
    <property type="match status" value="1"/>
</dbReference>
<dbReference type="HAMAP" id="MF_00289_B">
    <property type="entry name" value="Proteasome_A_B"/>
    <property type="match status" value="1"/>
</dbReference>
<dbReference type="InterPro" id="IPR029055">
    <property type="entry name" value="Ntn_hydrolases_N"/>
</dbReference>
<dbReference type="InterPro" id="IPR050115">
    <property type="entry name" value="Proteasome_alpha"/>
</dbReference>
<dbReference type="InterPro" id="IPR023332">
    <property type="entry name" value="Proteasome_alpha-type"/>
</dbReference>
<dbReference type="InterPro" id="IPR022296">
    <property type="entry name" value="Proteasome_asu_bac"/>
</dbReference>
<dbReference type="InterPro" id="IPR001353">
    <property type="entry name" value="Proteasome_sua/b"/>
</dbReference>
<dbReference type="NCBIfam" id="TIGR03691">
    <property type="entry name" value="20S_bact_alpha"/>
    <property type="match status" value="1"/>
</dbReference>
<dbReference type="PANTHER" id="PTHR11599">
    <property type="entry name" value="PROTEASOME SUBUNIT ALPHA/BETA"/>
    <property type="match status" value="1"/>
</dbReference>
<dbReference type="Pfam" id="PF00227">
    <property type="entry name" value="Proteasome"/>
    <property type="match status" value="1"/>
</dbReference>
<dbReference type="SUPFAM" id="SSF56235">
    <property type="entry name" value="N-terminal nucleophile aminohydrolases (Ntn hydrolases)"/>
    <property type="match status" value="1"/>
</dbReference>
<dbReference type="PROSITE" id="PS51475">
    <property type="entry name" value="PROTEASOME_ALPHA_2"/>
    <property type="match status" value="1"/>
</dbReference>
<comment type="function">
    <text evidence="1">Component of the proteasome core, a large protease complex with broad specificity involved in protein degradation.</text>
</comment>
<comment type="activity regulation">
    <text evidence="1">The formation of the proteasomal ATPase ARC-20S proteasome complex, likely via the docking of the C-termini of ARC into the intersubunit pockets in the alpha-rings, may trigger opening of the gate for substrate entry. Interconversion between the open-gate and close-gate conformations leads to a dynamic regulation of the 20S proteasome proteolysis activity.</text>
</comment>
<comment type="pathway">
    <text evidence="1">Protein degradation; proteasomal Pup-dependent pathway.</text>
</comment>
<comment type="subunit">
    <text evidence="1">The 20S proteasome core is composed of 14 alpha and 14 beta subunits that assemble into four stacked heptameric rings, resulting in a barrel-shaped structure. The two inner rings, each composed of seven catalytic beta subunits, are sandwiched by two outer rings, each composed of seven alpha subunits. The catalytic chamber with the active sites is on the inside of the barrel. Has a gated structure, the ends of the cylinder being occluded by the N-termini of the alpha-subunits. Is capped by the proteasome-associated ATPase, ARC.</text>
</comment>
<comment type="subcellular location">
    <subcellularLocation>
        <location evidence="1">Cytoplasm</location>
    </subcellularLocation>
</comment>
<comment type="similarity">
    <text evidence="1">Belongs to the peptidase T1A family.</text>
</comment>
<proteinExistence type="inferred from homology"/>
<gene>
    <name evidence="1" type="primary">prcA</name>
    <name type="ordered locus">Sare_2362</name>
</gene>